<sequence length="280" mass="30482">MAKNNVSTFVSAKHNNEKITMLTAYDYSMAKLMDESGINGILVGDSLGMVCLGYKDTLSVTMEDMLHHIKAVTRGAKDALVVGDMPFMSYQTSVYDAVKNAGRIIQEGLAGAVKLEGGVSVYEQVKAIVKAQIPVMGHIGLTPQSVNVFGGFKVQGKDESKAKNIIEDAKRLEEAGAFSIVLEGIPYKLAKIITETVSIPTIGIGAGKYCDGQILVYQDMLGLFSDFKPKFVKSYGNAGEVIRKAFKDYITEVKEGIFPDEEYSFKMDDSIIDKCIKEGV</sequence>
<accession>A5N5W0</accession>
<feature type="chain" id="PRO_1000076823" description="3-methyl-2-oxobutanoate hydroxymethyltransferase">
    <location>
        <begin position="1"/>
        <end position="280"/>
    </location>
</feature>
<feature type="active site" description="Proton acceptor" evidence="1">
    <location>
        <position position="183"/>
    </location>
</feature>
<feature type="binding site" evidence="1">
    <location>
        <begin position="45"/>
        <end position="46"/>
    </location>
    <ligand>
        <name>3-methyl-2-oxobutanoate</name>
        <dbReference type="ChEBI" id="CHEBI:11851"/>
    </ligand>
</feature>
<feature type="binding site" evidence="1">
    <location>
        <position position="45"/>
    </location>
    <ligand>
        <name>Mg(2+)</name>
        <dbReference type="ChEBI" id="CHEBI:18420"/>
    </ligand>
</feature>
<feature type="binding site" evidence="1">
    <location>
        <position position="84"/>
    </location>
    <ligand>
        <name>3-methyl-2-oxobutanoate</name>
        <dbReference type="ChEBI" id="CHEBI:11851"/>
    </ligand>
</feature>
<feature type="binding site" evidence="1">
    <location>
        <position position="84"/>
    </location>
    <ligand>
        <name>Mg(2+)</name>
        <dbReference type="ChEBI" id="CHEBI:18420"/>
    </ligand>
</feature>
<feature type="binding site" evidence="1">
    <location>
        <position position="114"/>
    </location>
    <ligand>
        <name>3-methyl-2-oxobutanoate</name>
        <dbReference type="ChEBI" id="CHEBI:11851"/>
    </ligand>
</feature>
<feature type="binding site" evidence="1">
    <location>
        <position position="116"/>
    </location>
    <ligand>
        <name>Mg(2+)</name>
        <dbReference type="ChEBI" id="CHEBI:18420"/>
    </ligand>
</feature>
<dbReference type="EC" id="2.1.2.11" evidence="1"/>
<dbReference type="EMBL" id="CP000673">
    <property type="protein sequence ID" value="EDK32691.1"/>
    <property type="molecule type" value="Genomic_DNA"/>
</dbReference>
<dbReference type="RefSeq" id="WP_011989206.1">
    <property type="nucleotide sequence ID" value="NC_009706.1"/>
</dbReference>
<dbReference type="SMR" id="A5N5W0"/>
<dbReference type="STRING" id="431943.CKL_0637"/>
<dbReference type="KEGG" id="ckl:CKL_0637"/>
<dbReference type="eggNOG" id="COG0413">
    <property type="taxonomic scope" value="Bacteria"/>
</dbReference>
<dbReference type="HOGENOM" id="CLU_036645_1_0_9"/>
<dbReference type="UniPathway" id="UPA00028">
    <property type="reaction ID" value="UER00003"/>
</dbReference>
<dbReference type="Proteomes" id="UP000002411">
    <property type="component" value="Chromosome"/>
</dbReference>
<dbReference type="GO" id="GO:0005737">
    <property type="term" value="C:cytoplasm"/>
    <property type="evidence" value="ECO:0007669"/>
    <property type="project" value="UniProtKB-SubCell"/>
</dbReference>
<dbReference type="GO" id="GO:0003864">
    <property type="term" value="F:3-methyl-2-oxobutanoate hydroxymethyltransferase activity"/>
    <property type="evidence" value="ECO:0007669"/>
    <property type="project" value="UniProtKB-UniRule"/>
</dbReference>
<dbReference type="GO" id="GO:0000287">
    <property type="term" value="F:magnesium ion binding"/>
    <property type="evidence" value="ECO:0007669"/>
    <property type="project" value="TreeGrafter"/>
</dbReference>
<dbReference type="GO" id="GO:0015940">
    <property type="term" value="P:pantothenate biosynthetic process"/>
    <property type="evidence" value="ECO:0007669"/>
    <property type="project" value="UniProtKB-UniRule"/>
</dbReference>
<dbReference type="CDD" id="cd06557">
    <property type="entry name" value="KPHMT-like"/>
    <property type="match status" value="1"/>
</dbReference>
<dbReference type="FunFam" id="3.20.20.60:FF:000003">
    <property type="entry name" value="3-methyl-2-oxobutanoate hydroxymethyltransferase"/>
    <property type="match status" value="1"/>
</dbReference>
<dbReference type="Gene3D" id="3.20.20.60">
    <property type="entry name" value="Phosphoenolpyruvate-binding domains"/>
    <property type="match status" value="1"/>
</dbReference>
<dbReference type="HAMAP" id="MF_00156">
    <property type="entry name" value="PanB"/>
    <property type="match status" value="1"/>
</dbReference>
<dbReference type="InterPro" id="IPR003700">
    <property type="entry name" value="Pantoate_hydroxy_MeTrfase"/>
</dbReference>
<dbReference type="InterPro" id="IPR015813">
    <property type="entry name" value="Pyrv/PenolPyrv_kinase-like_dom"/>
</dbReference>
<dbReference type="InterPro" id="IPR040442">
    <property type="entry name" value="Pyrv_kinase-like_dom_sf"/>
</dbReference>
<dbReference type="NCBIfam" id="TIGR00222">
    <property type="entry name" value="panB"/>
    <property type="match status" value="1"/>
</dbReference>
<dbReference type="NCBIfam" id="NF001452">
    <property type="entry name" value="PRK00311.1"/>
    <property type="match status" value="1"/>
</dbReference>
<dbReference type="PANTHER" id="PTHR20881">
    <property type="entry name" value="3-METHYL-2-OXOBUTANOATE HYDROXYMETHYLTRANSFERASE"/>
    <property type="match status" value="1"/>
</dbReference>
<dbReference type="PANTHER" id="PTHR20881:SF0">
    <property type="entry name" value="3-METHYL-2-OXOBUTANOATE HYDROXYMETHYLTRANSFERASE"/>
    <property type="match status" value="1"/>
</dbReference>
<dbReference type="Pfam" id="PF02548">
    <property type="entry name" value="Pantoate_transf"/>
    <property type="match status" value="1"/>
</dbReference>
<dbReference type="PIRSF" id="PIRSF000388">
    <property type="entry name" value="Pantoate_hydroxy_MeTrfase"/>
    <property type="match status" value="1"/>
</dbReference>
<dbReference type="SUPFAM" id="SSF51621">
    <property type="entry name" value="Phosphoenolpyruvate/pyruvate domain"/>
    <property type="match status" value="1"/>
</dbReference>
<name>PANB_CLOK5</name>
<evidence type="ECO:0000255" key="1">
    <source>
        <dbReference type="HAMAP-Rule" id="MF_00156"/>
    </source>
</evidence>
<organism>
    <name type="scientific">Clostridium kluyveri (strain ATCC 8527 / DSM 555 / NBRC 12016 / NCIMB 10680 / K1)</name>
    <dbReference type="NCBI Taxonomy" id="431943"/>
    <lineage>
        <taxon>Bacteria</taxon>
        <taxon>Bacillati</taxon>
        <taxon>Bacillota</taxon>
        <taxon>Clostridia</taxon>
        <taxon>Eubacteriales</taxon>
        <taxon>Clostridiaceae</taxon>
        <taxon>Clostridium</taxon>
    </lineage>
</organism>
<reference key="1">
    <citation type="journal article" date="2008" name="Proc. Natl. Acad. Sci. U.S.A.">
        <title>The genome of Clostridium kluyveri, a strict anaerobe with unique metabolic features.</title>
        <authorList>
            <person name="Seedorf H."/>
            <person name="Fricke W.F."/>
            <person name="Veith B."/>
            <person name="Brueggemann H."/>
            <person name="Liesegang H."/>
            <person name="Strittmatter A."/>
            <person name="Miethke M."/>
            <person name="Buckel W."/>
            <person name="Hinderberger J."/>
            <person name="Li F."/>
            <person name="Hagemeier C."/>
            <person name="Thauer R.K."/>
            <person name="Gottschalk G."/>
        </authorList>
    </citation>
    <scope>NUCLEOTIDE SEQUENCE [LARGE SCALE GENOMIC DNA]</scope>
    <source>
        <strain>ATCC 8527 / DSM 555 / NBRC 12016 / NCIMB 10680 / K1</strain>
    </source>
</reference>
<proteinExistence type="inferred from homology"/>
<gene>
    <name evidence="1" type="primary">panB</name>
    <name type="ordered locus">CKL_0637</name>
</gene>
<protein>
    <recommendedName>
        <fullName evidence="1">3-methyl-2-oxobutanoate hydroxymethyltransferase</fullName>
        <ecNumber evidence="1">2.1.2.11</ecNumber>
    </recommendedName>
    <alternativeName>
        <fullName evidence="1">Ketopantoate hydroxymethyltransferase</fullName>
        <shortName evidence="1">KPHMT</shortName>
    </alternativeName>
</protein>
<comment type="function">
    <text evidence="1">Catalyzes the reversible reaction in which hydroxymethyl group from 5,10-methylenetetrahydrofolate is transferred onto alpha-ketoisovalerate to form ketopantoate.</text>
</comment>
<comment type="catalytic activity">
    <reaction evidence="1">
        <text>3-methyl-2-oxobutanoate + (6R)-5,10-methylene-5,6,7,8-tetrahydrofolate + H2O = 2-dehydropantoate + (6S)-5,6,7,8-tetrahydrofolate</text>
        <dbReference type="Rhea" id="RHEA:11824"/>
        <dbReference type="ChEBI" id="CHEBI:11561"/>
        <dbReference type="ChEBI" id="CHEBI:11851"/>
        <dbReference type="ChEBI" id="CHEBI:15377"/>
        <dbReference type="ChEBI" id="CHEBI:15636"/>
        <dbReference type="ChEBI" id="CHEBI:57453"/>
        <dbReference type="EC" id="2.1.2.11"/>
    </reaction>
</comment>
<comment type="cofactor">
    <cofactor evidence="1">
        <name>Mg(2+)</name>
        <dbReference type="ChEBI" id="CHEBI:18420"/>
    </cofactor>
    <text evidence="1">Binds 1 Mg(2+) ion per subunit.</text>
</comment>
<comment type="pathway">
    <text evidence="1">Cofactor biosynthesis; (R)-pantothenate biosynthesis; (R)-pantoate from 3-methyl-2-oxobutanoate: step 1/2.</text>
</comment>
<comment type="subunit">
    <text evidence="1">Homodecamer; pentamer of dimers.</text>
</comment>
<comment type="subcellular location">
    <subcellularLocation>
        <location evidence="1">Cytoplasm</location>
    </subcellularLocation>
</comment>
<comment type="similarity">
    <text evidence="1">Belongs to the PanB family.</text>
</comment>
<keyword id="KW-0963">Cytoplasm</keyword>
<keyword id="KW-0460">Magnesium</keyword>
<keyword id="KW-0479">Metal-binding</keyword>
<keyword id="KW-0566">Pantothenate biosynthesis</keyword>
<keyword id="KW-1185">Reference proteome</keyword>
<keyword id="KW-0808">Transferase</keyword>